<sequence>MTVSCPPPSTSEREEQARALCLRLLTARSRTRAELAGQLAKRGYPEDIGNRVLDRLAAVGLVDDTDFAEQWVQSRRANAAKSKRALAAELHAKGVDDDVITTVLGGIDAGAERGRAEKLVRARLRREVLIDDGTDEARVSRRLVAMLARRGYGQTLACEVVIAELAAERERRRV</sequence>
<proteinExistence type="inferred from homology"/>
<name>RECX_MYCTA</name>
<feature type="chain" id="PRO_1000065189" description="Regulatory protein RecX">
    <location>
        <begin position="1"/>
        <end position="174"/>
    </location>
</feature>
<reference key="1">
    <citation type="journal article" date="2008" name="PLoS ONE">
        <title>Genetic basis of virulence attenuation revealed by comparative genomic analysis of Mycobacterium tuberculosis strain H37Ra versus H37Rv.</title>
        <authorList>
            <person name="Zheng H."/>
            <person name="Lu L."/>
            <person name="Wang B."/>
            <person name="Pu S."/>
            <person name="Zhang X."/>
            <person name="Zhu G."/>
            <person name="Shi W."/>
            <person name="Zhang L."/>
            <person name="Wang H."/>
            <person name="Wang S."/>
            <person name="Zhao G."/>
            <person name="Zhang Y."/>
        </authorList>
    </citation>
    <scope>NUCLEOTIDE SEQUENCE [LARGE SCALE GENOMIC DNA]</scope>
    <source>
        <strain>ATCC 25177 / H37Ra</strain>
    </source>
</reference>
<dbReference type="EMBL" id="CP000611">
    <property type="protein sequence ID" value="ABQ74538.1"/>
    <property type="molecule type" value="Genomic_DNA"/>
</dbReference>
<dbReference type="RefSeq" id="WP_003900562.1">
    <property type="nucleotide sequence ID" value="NZ_CP016972.1"/>
</dbReference>
<dbReference type="SMR" id="A5U688"/>
<dbReference type="KEGG" id="mra:MRA_2762"/>
<dbReference type="eggNOG" id="COG2137">
    <property type="taxonomic scope" value="Bacteria"/>
</dbReference>
<dbReference type="HOGENOM" id="CLU_066607_0_2_11"/>
<dbReference type="Proteomes" id="UP000001988">
    <property type="component" value="Chromosome"/>
</dbReference>
<dbReference type="GO" id="GO:0005737">
    <property type="term" value="C:cytoplasm"/>
    <property type="evidence" value="ECO:0007669"/>
    <property type="project" value="UniProtKB-SubCell"/>
</dbReference>
<dbReference type="GO" id="GO:0006282">
    <property type="term" value="P:regulation of DNA repair"/>
    <property type="evidence" value="ECO:0007669"/>
    <property type="project" value="UniProtKB-UniRule"/>
</dbReference>
<dbReference type="FunFam" id="1.10.10.10:FF:000656">
    <property type="entry name" value="Regulatory protein RecX"/>
    <property type="match status" value="1"/>
</dbReference>
<dbReference type="Gene3D" id="1.10.10.10">
    <property type="entry name" value="Winged helix-like DNA-binding domain superfamily/Winged helix DNA-binding domain"/>
    <property type="match status" value="2"/>
</dbReference>
<dbReference type="HAMAP" id="MF_01114">
    <property type="entry name" value="RecX"/>
    <property type="match status" value="1"/>
</dbReference>
<dbReference type="InterPro" id="IPR053926">
    <property type="entry name" value="RecX_HTH_1st"/>
</dbReference>
<dbReference type="InterPro" id="IPR053924">
    <property type="entry name" value="RecX_HTH_2nd"/>
</dbReference>
<dbReference type="InterPro" id="IPR003783">
    <property type="entry name" value="Regulatory_RecX"/>
</dbReference>
<dbReference type="InterPro" id="IPR036388">
    <property type="entry name" value="WH-like_DNA-bd_sf"/>
</dbReference>
<dbReference type="NCBIfam" id="NF001056">
    <property type="entry name" value="PRK00117.3-1"/>
    <property type="match status" value="1"/>
</dbReference>
<dbReference type="PANTHER" id="PTHR33602">
    <property type="entry name" value="REGULATORY PROTEIN RECX FAMILY PROTEIN"/>
    <property type="match status" value="1"/>
</dbReference>
<dbReference type="PANTHER" id="PTHR33602:SF1">
    <property type="entry name" value="REGULATORY PROTEIN RECX FAMILY PROTEIN"/>
    <property type="match status" value="1"/>
</dbReference>
<dbReference type="Pfam" id="PF21982">
    <property type="entry name" value="RecX_HTH1"/>
    <property type="match status" value="1"/>
</dbReference>
<dbReference type="Pfam" id="PF02631">
    <property type="entry name" value="RecX_HTH2"/>
    <property type="match status" value="1"/>
</dbReference>
<gene>
    <name evidence="1" type="primary">recX</name>
    <name type="ordered locus">MRA_2762</name>
</gene>
<keyword id="KW-0963">Cytoplasm</keyword>
<keyword id="KW-1185">Reference proteome</keyword>
<evidence type="ECO:0000255" key="1">
    <source>
        <dbReference type="HAMAP-Rule" id="MF_01114"/>
    </source>
</evidence>
<accession>A5U688</accession>
<protein>
    <recommendedName>
        <fullName evidence="1">Regulatory protein RecX</fullName>
    </recommendedName>
</protein>
<organism>
    <name type="scientific">Mycobacterium tuberculosis (strain ATCC 25177 / H37Ra)</name>
    <dbReference type="NCBI Taxonomy" id="419947"/>
    <lineage>
        <taxon>Bacteria</taxon>
        <taxon>Bacillati</taxon>
        <taxon>Actinomycetota</taxon>
        <taxon>Actinomycetes</taxon>
        <taxon>Mycobacteriales</taxon>
        <taxon>Mycobacteriaceae</taxon>
        <taxon>Mycobacterium</taxon>
        <taxon>Mycobacterium tuberculosis complex</taxon>
    </lineage>
</organism>
<comment type="function">
    <text evidence="1">Modulates RecA activity.</text>
</comment>
<comment type="subcellular location">
    <subcellularLocation>
        <location evidence="1">Cytoplasm</location>
    </subcellularLocation>
</comment>
<comment type="similarity">
    <text evidence="1">Belongs to the RecX family.</text>
</comment>